<name>NODI_RHIME</name>
<evidence type="ECO:0000255" key="1">
    <source>
        <dbReference type="HAMAP-Rule" id="MF_01704"/>
    </source>
</evidence>
<evidence type="ECO:0000305" key="2"/>
<keyword id="KW-0067">ATP-binding</keyword>
<keyword id="KW-0997">Cell inner membrane</keyword>
<keyword id="KW-1003">Cell membrane</keyword>
<keyword id="KW-0472">Membrane</keyword>
<keyword id="KW-0536">Nodulation</keyword>
<keyword id="KW-0547">Nucleotide-binding</keyword>
<keyword id="KW-0614">Plasmid</keyword>
<keyword id="KW-1185">Reference proteome</keyword>
<keyword id="KW-1278">Translocase</keyword>
<keyword id="KW-0813">Transport</keyword>
<protein>
    <recommendedName>
        <fullName evidence="1">Nod factor export ATP-binding protein I</fullName>
        <ecNumber evidence="1">7.6.2.-</ecNumber>
    </recommendedName>
    <alternativeName>
        <fullName evidence="1">Nodulation ATP-binding protein I</fullName>
    </alternativeName>
</protein>
<proteinExistence type="inferred from homology"/>
<feature type="chain" id="PRO_0000092641" description="Nod factor export ATP-binding protein I">
    <location>
        <begin position="1"/>
        <end position="335"/>
    </location>
</feature>
<feature type="domain" description="ABC transporter" evidence="1">
    <location>
        <begin position="37"/>
        <end position="267"/>
    </location>
</feature>
<feature type="binding site" evidence="1">
    <location>
        <begin position="69"/>
        <end position="76"/>
    </location>
    <ligand>
        <name>ATP</name>
        <dbReference type="ChEBI" id="CHEBI:30616"/>
    </ligand>
</feature>
<dbReference type="EC" id="7.6.2.-" evidence="1"/>
<dbReference type="EMBL" id="AE006469">
    <property type="protein sequence ID" value="AAK65130.1"/>
    <property type="status" value="ALT_INIT"/>
    <property type="molecule type" value="Genomic_DNA"/>
</dbReference>
<dbReference type="EMBL" id="AF043118">
    <property type="protein sequence ID" value="AAB97762.1"/>
    <property type="molecule type" value="Genomic_DNA"/>
</dbReference>
<dbReference type="PIR" id="H95320">
    <property type="entry name" value="H95320"/>
</dbReference>
<dbReference type="RefSeq" id="NP_435718.1">
    <property type="nucleotide sequence ID" value="NC_003037.1"/>
</dbReference>
<dbReference type="SMR" id="O52618"/>
<dbReference type="EnsemblBacteria" id="AAK65130">
    <property type="protein sequence ID" value="AAK65130"/>
    <property type="gene ID" value="SMa0864"/>
</dbReference>
<dbReference type="KEGG" id="sme:SMa0864"/>
<dbReference type="PATRIC" id="fig|266834.11.peg.483"/>
<dbReference type="HOGENOM" id="CLU_000604_1_2_5"/>
<dbReference type="OrthoDB" id="9778547at2"/>
<dbReference type="Proteomes" id="UP000001976">
    <property type="component" value="Plasmid pSymA"/>
</dbReference>
<dbReference type="GO" id="GO:0005886">
    <property type="term" value="C:plasma membrane"/>
    <property type="evidence" value="ECO:0007669"/>
    <property type="project" value="UniProtKB-SubCell"/>
</dbReference>
<dbReference type="GO" id="GO:0005524">
    <property type="term" value="F:ATP binding"/>
    <property type="evidence" value="ECO:0007669"/>
    <property type="project" value="UniProtKB-KW"/>
</dbReference>
<dbReference type="GO" id="GO:0016887">
    <property type="term" value="F:ATP hydrolysis activity"/>
    <property type="evidence" value="ECO:0007669"/>
    <property type="project" value="InterPro"/>
</dbReference>
<dbReference type="GO" id="GO:0022857">
    <property type="term" value="F:transmembrane transporter activity"/>
    <property type="evidence" value="ECO:0007669"/>
    <property type="project" value="InterPro"/>
</dbReference>
<dbReference type="CDD" id="cd03230">
    <property type="entry name" value="ABC_DR_subfamily_A"/>
    <property type="match status" value="1"/>
</dbReference>
<dbReference type="FunFam" id="3.40.50.300:FF:000589">
    <property type="entry name" value="ABC transporter, ATP-binding subunit"/>
    <property type="match status" value="1"/>
</dbReference>
<dbReference type="Gene3D" id="3.40.50.300">
    <property type="entry name" value="P-loop containing nucleotide triphosphate hydrolases"/>
    <property type="match status" value="1"/>
</dbReference>
<dbReference type="InterPro" id="IPR003593">
    <property type="entry name" value="AAA+_ATPase"/>
</dbReference>
<dbReference type="InterPro" id="IPR003439">
    <property type="entry name" value="ABC_transporter-like_ATP-bd"/>
</dbReference>
<dbReference type="InterPro" id="IPR017871">
    <property type="entry name" value="ABC_transporter-like_CS"/>
</dbReference>
<dbReference type="InterPro" id="IPR050763">
    <property type="entry name" value="ABC_transporter_ATP-binding"/>
</dbReference>
<dbReference type="InterPro" id="IPR005978">
    <property type="entry name" value="ABC_transptNodI"/>
</dbReference>
<dbReference type="InterPro" id="IPR027417">
    <property type="entry name" value="P-loop_NTPase"/>
</dbReference>
<dbReference type="NCBIfam" id="TIGR01288">
    <property type="entry name" value="nodI"/>
    <property type="match status" value="1"/>
</dbReference>
<dbReference type="NCBIfam" id="NF010059">
    <property type="entry name" value="PRK13536.1"/>
    <property type="match status" value="1"/>
</dbReference>
<dbReference type="PANTHER" id="PTHR42711">
    <property type="entry name" value="ABC TRANSPORTER ATP-BINDING PROTEIN"/>
    <property type="match status" value="1"/>
</dbReference>
<dbReference type="PANTHER" id="PTHR42711:SF5">
    <property type="entry name" value="ABC TRANSPORTER ATP-BINDING PROTEIN NATA"/>
    <property type="match status" value="1"/>
</dbReference>
<dbReference type="Pfam" id="PF00005">
    <property type="entry name" value="ABC_tran"/>
    <property type="match status" value="1"/>
</dbReference>
<dbReference type="SMART" id="SM00382">
    <property type="entry name" value="AAA"/>
    <property type="match status" value="1"/>
</dbReference>
<dbReference type="SUPFAM" id="SSF52540">
    <property type="entry name" value="P-loop containing nucleoside triphosphate hydrolases"/>
    <property type="match status" value="1"/>
</dbReference>
<dbReference type="PROSITE" id="PS00211">
    <property type="entry name" value="ABC_TRANSPORTER_1"/>
    <property type="match status" value="1"/>
</dbReference>
<dbReference type="PROSITE" id="PS50893">
    <property type="entry name" value="ABC_TRANSPORTER_2"/>
    <property type="match status" value="1"/>
</dbReference>
<dbReference type="PROSITE" id="PS51240">
    <property type="entry name" value="NODI"/>
    <property type="match status" value="1"/>
</dbReference>
<sequence length="335" mass="36983">MAQEAPRWLEPSPFEWKDQTGLAVKTAIPGAKPTVAIDVASVTKSYGDKPVINGLSFTVAAGECFGLLGPNGAGKSTITRMILGMTTPGTGEITVLGVPVPSRARLARMRIGVVPQFDNLDLEFTVRENLLVFGRYFRMSTREIEAVIPSLLEFARLENKADARVSDLSGGMKRRLTLARALINDPQLLILDEPTTGLDPHARHLIWERLRSLLARGKTILLTTHIMEEAERLCDRLCVLEAGHKIAEGRPHMLIDEKIGCQVIEIYGGDPHELSALVSPHARHIEVSGETVFCYASDPEQVRVQLDGRAGVRFLQRPPNLEDVFLRLTGRELKD</sequence>
<geneLocation type="plasmid">
    <name>pSymA</name>
    <name>megaplasmid 1</name>
</geneLocation>
<comment type="function">
    <text evidence="1">Part of the ABC transporter complex NodIJ involved in the export of the nodulation factors (Nod factors), the bacterial signal molecules that induce symbiosis and subsequent nodulation induction. Nod factors are LCO (lipo-chitin oligosaccharide), a modified beta-1,4-linked N-acetylglucosamine oligosaccharide. This subunit is responsible for energy coupling to the transport system.</text>
</comment>
<comment type="subunit">
    <text evidence="1">The complex is composed of two ATP-binding proteins (NodI) and two transmembrane proteins (NodJ).</text>
</comment>
<comment type="subcellular location">
    <subcellularLocation>
        <location evidence="1">Cell inner membrane</location>
        <topology evidence="1">Peripheral membrane protein</topology>
    </subcellularLocation>
</comment>
<comment type="similarity">
    <text evidence="1">Belongs to the ABC transporter superfamily. Lipooligosaccharide exporter (TC 3.A.1.102) family.</text>
</comment>
<comment type="sequence caution" evidence="2">
    <conflict type="erroneous initiation">
        <sequence resource="EMBL-CDS" id="AAK65130"/>
    </conflict>
</comment>
<reference key="1">
    <citation type="journal article" date="2001" name="Proc. Natl. Acad. Sci. U.S.A.">
        <title>Nucleotide sequence and predicted functions of the entire Sinorhizobium meliloti pSymA megaplasmid.</title>
        <authorList>
            <person name="Barnett M.J."/>
            <person name="Fisher R.F."/>
            <person name="Jones T."/>
            <person name="Komp C."/>
            <person name="Abola A.P."/>
            <person name="Barloy-Hubler F."/>
            <person name="Bowser L."/>
            <person name="Capela D."/>
            <person name="Galibert F."/>
            <person name="Gouzy J."/>
            <person name="Gurjal M."/>
            <person name="Hong A."/>
            <person name="Huizar L."/>
            <person name="Hyman R.W."/>
            <person name="Kahn D."/>
            <person name="Kahn M.L."/>
            <person name="Kalman S."/>
            <person name="Keating D.H."/>
            <person name="Palm C."/>
            <person name="Peck M.C."/>
            <person name="Surzycki R."/>
            <person name="Wells D.H."/>
            <person name="Yeh K.-C."/>
            <person name="Davis R.W."/>
            <person name="Federspiel N.A."/>
            <person name="Long S.R."/>
        </authorList>
    </citation>
    <scope>NUCLEOTIDE SEQUENCE [LARGE SCALE GENOMIC DNA]</scope>
    <source>
        <strain>1021</strain>
    </source>
</reference>
<reference key="2">
    <citation type="journal article" date="2001" name="Science">
        <title>The composite genome of the legume symbiont Sinorhizobium meliloti.</title>
        <authorList>
            <person name="Galibert F."/>
            <person name="Finan T.M."/>
            <person name="Long S.R."/>
            <person name="Puehler A."/>
            <person name="Abola P."/>
            <person name="Ampe F."/>
            <person name="Barloy-Hubler F."/>
            <person name="Barnett M.J."/>
            <person name="Becker A."/>
            <person name="Boistard P."/>
            <person name="Bothe G."/>
            <person name="Boutry M."/>
            <person name="Bowser L."/>
            <person name="Buhrmester J."/>
            <person name="Cadieu E."/>
            <person name="Capela D."/>
            <person name="Chain P."/>
            <person name="Cowie A."/>
            <person name="Davis R.W."/>
            <person name="Dreano S."/>
            <person name="Federspiel N.A."/>
            <person name="Fisher R.F."/>
            <person name="Gloux S."/>
            <person name="Godrie T."/>
            <person name="Goffeau A."/>
            <person name="Golding B."/>
            <person name="Gouzy J."/>
            <person name="Gurjal M."/>
            <person name="Hernandez-Lucas I."/>
            <person name="Hong A."/>
            <person name="Huizar L."/>
            <person name="Hyman R.W."/>
            <person name="Jones T."/>
            <person name="Kahn D."/>
            <person name="Kahn M.L."/>
            <person name="Kalman S."/>
            <person name="Keating D.H."/>
            <person name="Kiss E."/>
            <person name="Komp C."/>
            <person name="Lelaure V."/>
            <person name="Masuy D."/>
            <person name="Palm C."/>
            <person name="Peck M.C."/>
            <person name="Pohl T.M."/>
            <person name="Portetelle D."/>
            <person name="Purnelle B."/>
            <person name="Ramsperger U."/>
            <person name="Surzycki R."/>
            <person name="Thebault P."/>
            <person name="Vandenbol M."/>
            <person name="Vorhoelter F.J."/>
            <person name="Weidner S."/>
            <person name="Wells D.H."/>
            <person name="Wong K."/>
            <person name="Yeh K.-C."/>
            <person name="Batut J."/>
        </authorList>
    </citation>
    <scope>NUCLEOTIDE SEQUENCE [LARGE SCALE GENOMIC DNA]</scope>
    <source>
        <strain>1021</strain>
    </source>
</reference>
<reference key="3">
    <citation type="submission" date="1998-01" db="EMBL/GenBank/DDBJ databases">
        <title>Nucleotide sequence of nodIJ region of Rhizobium meliloti pSymA.</title>
        <authorList>
            <person name="Barnett M.J."/>
            <person name="Long S.R."/>
        </authorList>
    </citation>
    <scope>NUCLEOTIDE SEQUENCE [GENOMIC DNA] OF 123-335</scope>
    <source>
        <strain>1021</strain>
    </source>
</reference>
<organism>
    <name type="scientific">Rhizobium meliloti (strain 1021)</name>
    <name type="common">Ensifer meliloti</name>
    <name type="synonym">Sinorhizobium meliloti</name>
    <dbReference type="NCBI Taxonomy" id="266834"/>
    <lineage>
        <taxon>Bacteria</taxon>
        <taxon>Pseudomonadati</taxon>
        <taxon>Pseudomonadota</taxon>
        <taxon>Alphaproteobacteria</taxon>
        <taxon>Hyphomicrobiales</taxon>
        <taxon>Rhizobiaceae</taxon>
        <taxon>Sinorhizobium/Ensifer group</taxon>
        <taxon>Sinorhizobium</taxon>
    </lineage>
</organism>
<accession>O52618</accession>
<gene>
    <name evidence="1" type="primary">nodI</name>
    <name type="ordered locus">RA0472</name>
    <name type="ORF">SMa0864</name>
</gene>